<evidence type="ECO:0000255" key="1">
    <source>
        <dbReference type="HAMAP-Rule" id="MF_01338"/>
    </source>
</evidence>
<protein>
    <recommendedName>
        <fullName evidence="1">Ribulose bisphosphate carboxylase large chain</fullName>
        <shortName evidence="1">RuBisCO large subunit</shortName>
        <ecNumber evidence="1">4.1.1.39</ecNumber>
    </recommendedName>
</protein>
<accession>O19989</accession>
<dbReference type="EC" id="4.1.1.39" evidence="1"/>
<dbReference type="EMBL" id="Y15017">
    <property type="protein sequence ID" value="CAA75248.1"/>
    <property type="molecule type" value="Genomic_DNA"/>
</dbReference>
<dbReference type="SMR" id="O19989"/>
<dbReference type="GO" id="GO:0009507">
    <property type="term" value="C:chloroplast"/>
    <property type="evidence" value="ECO:0007669"/>
    <property type="project" value="UniProtKB-SubCell"/>
</dbReference>
<dbReference type="GO" id="GO:0000287">
    <property type="term" value="F:magnesium ion binding"/>
    <property type="evidence" value="ECO:0007669"/>
    <property type="project" value="InterPro"/>
</dbReference>
<dbReference type="GO" id="GO:0004497">
    <property type="term" value="F:monooxygenase activity"/>
    <property type="evidence" value="ECO:0007669"/>
    <property type="project" value="UniProtKB-KW"/>
</dbReference>
<dbReference type="GO" id="GO:0016984">
    <property type="term" value="F:ribulose-bisphosphate carboxylase activity"/>
    <property type="evidence" value="ECO:0007669"/>
    <property type="project" value="UniProtKB-EC"/>
</dbReference>
<dbReference type="GO" id="GO:0009853">
    <property type="term" value="P:photorespiration"/>
    <property type="evidence" value="ECO:0007669"/>
    <property type="project" value="UniProtKB-KW"/>
</dbReference>
<dbReference type="GO" id="GO:0019253">
    <property type="term" value="P:reductive pentose-phosphate cycle"/>
    <property type="evidence" value="ECO:0007669"/>
    <property type="project" value="UniProtKB-KW"/>
</dbReference>
<dbReference type="CDD" id="cd08212">
    <property type="entry name" value="RuBisCO_large_I"/>
    <property type="match status" value="1"/>
</dbReference>
<dbReference type="FunFam" id="3.20.20.110:FF:000001">
    <property type="entry name" value="Ribulose bisphosphate carboxylase large chain"/>
    <property type="match status" value="1"/>
</dbReference>
<dbReference type="FunFam" id="3.30.70.150:FF:000001">
    <property type="entry name" value="Ribulose bisphosphate carboxylase large chain"/>
    <property type="match status" value="1"/>
</dbReference>
<dbReference type="Gene3D" id="3.20.20.110">
    <property type="entry name" value="Ribulose bisphosphate carboxylase, large subunit, C-terminal domain"/>
    <property type="match status" value="1"/>
</dbReference>
<dbReference type="Gene3D" id="3.30.70.150">
    <property type="entry name" value="RuBisCO large subunit, N-terminal domain"/>
    <property type="match status" value="1"/>
</dbReference>
<dbReference type="HAMAP" id="MF_01338">
    <property type="entry name" value="RuBisCO_L_type1"/>
    <property type="match status" value="1"/>
</dbReference>
<dbReference type="InterPro" id="IPR033966">
    <property type="entry name" value="RuBisCO"/>
</dbReference>
<dbReference type="InterPro" id="IPR020878">
    <property type="entry name" value="RuBisCo_large_chain_AS"/>
</dbReference>
<dbReference type="InterPro" id="IPR000685">
    <property type="entry name" value="RuBisCO_lsu_C"/>
</dbReference>
<dbReference type="InterPro" id="IPR036376">
    <property type="entry name" value="RuBisCO_lsu_C_sf"/>
</dbReference>
<dbReference type="InterPro" id="IPR017443">
    <property type="entry name" value="RuBisCO_lsu_fd_N"/>
</dbReference>
<dbReference type="InterPro" id="IPR036422">
    <property type="entry name" value="RuBisCO_lsu_N_sf"/>
</dbReference>
<dbReference type="InterPro" id="IPR020888">
    <property type="entry name" value="RuBisCO_lsuI"/>
</dbReference>
<dbReference type="NCBIfam" id="NF003252">
    <property type="entry name" value="PRK04208.1"/>
    <property type="match status" value="1"/>
</dbReference>
<dbReference type="PANTHER" id="PTHR42704">
    <property type="entry name" value="RIBULOSE BISPHOSPHATE CARBOXYLASE"/>
    <property type="match status" value="1"/>
</dbReference>
<dbReference type="PANTHER" id="PTHR42704:SF15">
    <property type="entry name" value="RIBULOSE BISPHOSPHATE CARBOXYLASE LARGE CHAIN"/>
    <property type="match status" value="1"/>
</dbReference>
<dbReference type="Pfam" id="PF00016">
    <property type="entry name" value="RuBisCO_large"/>
    <property type="match status" value="1"/>
</dbReference>
<dbReference type="Pfam" id="PF02788">
    <property type="entry name" value="RuBisCO_large_N"/>
    <property type="match status" value="1"/>
</dbReference>
<dbReference type="SFLD" id="SFLDG01052">
    <property type="entry name" value="RuBisCO"/>
    <property type="match status" value="1"/>
</dbReference>
<dbReference type="SFLD" id="SFLDS00014">
    <property type="entry name" value="RuBisCO"/>
    <property type="match status" value="1"/>
</dbReference>
<dbReference type="SFLD" id="SFLDG00301">
    <property type="entry name" value="RuBisCO-like_proteins"/>
    <property type="match status" value="1"/>
</dbReference>
<dbReference type="SUPFAM" id="SSF51649">
    <property type="entry name" value="RuBisCo, C-terminal domain"/>
    <property type="match status" value="1"/>
</dbReference>
<dbReference type="SUPFAM" id="SSF54966">
    <property type="entry name" value="RuBisCO, large subunit, small (N-terminal) domain"/>
    <property type="match status" value="1"/>
</dbReference>
<dbReference type="PROSITE" id="PS00157">
    <property type="entry name" value="RUBISCO_LARGE"/>
    <property type="match status" value="1"/>
</dbReference>
<geneLocation type="chloroplast"/>
<comment type="function">
    <text evidence="1">RuBisCO catalyzes two reactions: the carboxylation of D-ribulose 1,5-bisphosphate, the primary event in carbon dioxide fixation, as well as the oxidative fragmentation of the pentose substrate in the photorespiration process. Both reactions occur simultaneously and in competition at the same active site.</text>
</comment>
<comment type="catalytic activity">
    <reaction evidence="1">
        <text>2 (2R)-3-phosphoglycerate + 2 H(+) = D-ribulose 1,5-bisphosphate + CO2 + H2O</text>
        <dbReference type="Rhea" id="RHEA:23124"/>
        <dbReference type="ChEBI" id="CHEBI:15377"/>
        <dbReference type="ChEBI" id="CHEBI:15378"/>
        <dbReference type="ChEBI" id="CHEBI:16526"/>
        <dbReference type="ChEBI" id="CHEBI:57870"/>
        <dbReference type="ChEBI" id="CHEBI:58272"/>
        <dbReference type="EC" id="4.1.1.39"/>
    </reaction>
</comment>
<comment type="catalytic activity">
    <reaction evidence="1">
        <text>D-ribulose 1,5-bisphosphate + O2 = 2-phosphoglycolate + (2R)-3-phosphoglycerate + 2 H(+)</text>
        <dbReference type="Rhea" id="RHEA:36631"/>
        <dbReference type="ChEBI" id="CHEBI:15378"/>
        <dbReference type="ChEBI" id="CHEBI:15379"/>
        <dbReference type="ChEBI" id="CHEBI:57870"/>
        <dbReference type="ChEBI" id="CHEBI:58033"/>
        <dbReference type="ChEBI" id="CHEBI:58272"/>
    </reaction>
</comment>
<comment type="cofactor">
    <cofactor evidence="1">
        <name>Mg(2+)</name>
        <dbReference type="ChEBI" id="CHEBI:18420"/>
    </cofactor>
    <text evidence="1">Binds 1 Mg(2+) ion per subunit.</text>
</comment>
<comment type="subunit">
    <text evidence="1">Heterohexadecamer of 8 large chains and 8 small chains; disulfide-linked. The disulfide link is formed within the large subunit homodimers.</text>
</comment>
<comment type="subcellular location">
    <subcellularLocation>
        <location>Plastid</location>
        <location>Chloroplast</location>
    </subcellularLocation>
</comment>
<comment type="PTM">
    <text evidence="1">The disulfide bond which can form in the large chain dimeric partners within the hexadecamer appears to be associated with oxidative stress and protein turnover.</text>
</comment>
<comment type="miscellaneous">
    <text evidence="1">The basic functional RuBisCO is composed of a large chain homodimer in a 'head-to-tail' conformation. In form I RuBisCO this homodimer is arranged in a barrel-like tetramer with the small subunits forming a tetrameric 'cap' on each end of the 'barrel'.</text>
</comment>
<comment type="similarity">
    <text evidence="1">Belongs to the RuBisCO large chain family. Type I subfamily.</text>
</comment>
<gene>
    <name evidence="1" type="primary">rbcL</name>
</gene>
<reference key="1">
    <citation type="journal article" date="1996" name="Bot. J. Linn. Soc.">
        <title>A phylogenetic analysis of Zygophyllaceae R.Br. based on morphological anatomical and rbcL sequence data.</title>
        <authorList>
            <person name="Sheahan M.C."/>
            <person name="Chase M.W."/>
        </authorList>
        <dbReference type="AGRICOLA" id="IND20606153"/>
    </citation>
    <scope>NUCLEOTIDE SEQUENCE [GENOMIC DNA]</scope>
</reference>
<organism>
    <name type="scientific">Gonopterodendron arboreum</name>
    <name type="common">Maracaibo lignum-vitae</name>
    <name type="synonym">Bulnesia arborea</name>
    <dbReference type="NCBI Taxonomy" id="66627"/>
    <lineage>
        <taxon>Eukaryota</taxon>
        <taxon>Viridiplantae</taxon>
        <taxon>Streptophyta</taxon>
        <taxon>Embryophyta</taxon>
        <taxon>Tracheophyta</taxon>
        <taxon>Spermatophyta</taxon>
        <taxon>Magnoliopsida</taxon>
        <taxon>eudicotyledons</taxon>
        <taxon>Gunneridae</taxon>
        <taxon>Pentapetalae</taxon>
        <taxon>rosids</taxon>
        <taxon>fabids</taxon>
        <taxon>Zygophyllales</taxon>
        <taxon>Zygophyllaceae</taxon>
        <taxon>Larreoideae</taxon>
        <taxon>Gonopterodendron</taxon>
    </lineage>
</organism>
<feature type="chain" id="PRO_0000062384" description="Ribulose bisphosphate carboxylase large chain">
    <location>
        <begin position="1" status="less than"/>
        <end position="466"/>
    </location>
</feature>
<feature type="active site" description="Proton acceptor" evidence="1">
    <location>
        <position position="166"/>
    </location>
</feature>
<feature type="active site" description="Proton acceptor" evidence="1">
    <location>
        <position position="285"/>
    </location>
</feature>
<feature type="binding site" description="in homodimeric partner" evidence="1">
    <location>
        <position position="114"/>
    </location>
    <ligand>
        <name>substrate</name>
    </ligand>
</feature>
<feature type="binding site" evidence="1">
    <location>
        <position position="164"/>
    </location>
    <ligand>
        <name>substrate</name>
    </ligand>
</feature>
<feature type="binding site" evidence="1">
    <location>
        <position position="168"/>
    </location>
    <ligand>
        <name>substrate</name>
    </ligand>
</feature>
<feature type="binding site" description="via carbamate group" evidence="1">
    <location>
        <position position="192"/>
    </location>
    <ligand>
        <name>Mg(2+)</name>
        <dbReference type="ChEBI" id="CHEBI:18420"/>
    </ligand>
</feature>
<feature type="binding site" evidence="1">
    <location>
        <position position="194"/>
    </location>
    <ligand>
        <name>Mg(2+)</name>
        <dbReference type="ChEBI" id="CHEBI:18420"/>
    </ligand>
</feature>
<feature type="binding site" evidence="1">
    <location>
        <position position="195"/>
    </location>
    <ligand>
        <name>Mg(2+)</name>
        <dbReference type="ChEBI" id="CHEBI:18420"/>
    </ligand>
</feature>
<feature type="binding site" evidence="1">
    <location>
        <position position="286"/>
    </location>
    <ligand>
        <name>substrate</name>
    </ligand>
</feature>
<feature type="binding site" evidence="1">
    <location>
        <position position="318"/>
    </location>
    <ligand>
        <name>substrate</name>
    </ligand>
</feature>
<feature type="binding site" evidence="1">
    <location>
        <position position="370"/>
    </location>
    <ligand>
        <name>substrate</name>
    </ligand>
</feature>
<feature type="site" description="Transition state stabilizer" evidence="1">
    <location>
        <position position="325"/>
    </location>
</feature>
<feature type="modified residue" description="N6,N6,N6-trimethyllysine" evidence="1">
    <location>
        <position position="5"/>
    </location>
</feature>
<feature type="modified residue" description="N6-carboxylysine" evidence="1">
    <location>
        <position position="192"/>
    </location>
</feature>
<feature type="disulfide bond" description="Interchain; in linked form" evidence="1">
    <location>
        <position position="238"/>
    </location>
</feature>
<feature type="non-terminal residue">
    <location>
        <position position="1"/>
    </location>
</feature>
<keyword id="KW-0113">Calvin cycle</keyword>
<keyword id="KW-0120">Carbon dioxide fixation</keyword>
<keyword id="KW-0150">Chloroplast</keyword>
<keyword id="KW-1015">Disulfide bond</keyword>
<keyword id="KW-0456">Lyase</keyword>
<keyword id="KW-0460">Magnesium</keyword>
<keyword id="KW-0479">Metal-binding</keyword>
<keyword id="KW-0488">Methylation</keyword>
<keyword id="KW-0503">Monooxygenase</keyword>
<keyword id="KW-0560">Oxidoreductase</keyword>
<keyword id="KW-0601">Photorespiration</keyword>
<keyword id="KW-0602">Photosynthesis</keyword>
<keyword id="KW-0934">Plastid</keyword>
<sequence length="466" mass="51599">SVGFKAGVKDYKLTYYTPEYETKDTDILAAFRVTPQPGVPPEEAGAAVAAESSTGTWTTVWTDGLTSLDRYKGRCYNIEPVAGEENQYIAYVAYPLDLFEEGSVTNMFTSIVGNVFGFKALRALRLEDLRIPKSYIKTFEGPPHGIQVERDKLNKYGRPLLGCTIKPKLGLSAKNYGRAVYECLRGGLDFTKDDENVNSQPFMRWRDRFLFCAEALFKAQAETGEIKGHYLNATAGTCEEMIKRAVCARELGAPIVMHDYLTGGFTANTSLAHYCRDNGLLLHIHRAMHAVIDRQKNHGMHFRVLAKALRLSGGDHIHAGTVVGKLEGEREITLGFVDLLRDDFVEKDRSRGIYFTQDWVSLPGVIPVASGGIHVWHMPALTEIFGDDSVLQFGGGTLGHPWGNAPGAVANRVALEACVQARNEGRDLAREGNTIIREASKWSPELAAACEVWKEIKFEFPAMDTL</sequence>
<proteinExistence type="inferred from homology"/>
<name>RBL_GONAR</name>